<reference key="1">
    <citation type="journal article" date="2008" name="J. Bacteriol.">
        <title>The complete genome sequence of Actinobacillus pleuropneumoniae L20 (serotype 5b).</title>
        <authorList>
            <person name="Foote S.J."/>
            <person name="Bosse J.T."/>
            <person name="Bouevitch A.B."/>
            <person name="Langford P.R."/>
            <person name="Young N.M."/>
            <person name="Nash J.H.E."/>
        </authorList>
    </citation>
    <scope>NUCLEOTIDE SEQUENCE [LARGE SCALE GENOMIC DNA]</scope>
    <source>
        <strain>L20</strain>
    </source>
</reference>
<feature type="chain" id="PRO_1000012695" description="ATP-dependent protease ATPase subunit HslU">
    <location>
        <begin position="1"/>
        <end position="440"/>
    </location>
</feature>
<feature type="binding site" evidence="1">
    <location>
        <position position="17"/>
    </location>
    <ligand>
        <name>ATP</name>
        <dbReference type="ChEBI" id="CHEBI:30616"/>
    </ligand>
</feature>
<feature type="binding site" evidence="1">
    <location>
        <begin position="59"/>
        <end position="64"/>
    </location>
    <ligand>
        <name>ATP</name>
        <dbReference type="ChEBI" id="CHEBI:30616"/>
    </ligand>
</feature>
<feature type="binding site" evidence="1">
    <location>
        <position position="253"/>
    </location>
    <ligand>
        <name>ATP</name>
        <dbReference type="ChEBI" id="CHEBI:30616"/>
    </ligand>
</feature>
<feature type="binding site" evidence="1">
    <location>
        <position position="318"/>
    </location>
    <ligand>
        <name>ATP</name>
        <dbReference type="ChEBI" id="CHEBI:30616"/>
    </ligand>
</feature>
<feature type="binding site" evidence="1">
    <location>
        <position position="390"/>
    </location>
    <ligand>
        <name>ATP</name>
        <dbReference type="ChEBI" id="CHEBI:30616"/>
    </ligand>
</feature>
<comment type="function">
    <text evidence="1">ATPase subunit of a proteasome-like degradation complex; this subunit has chaperone activity. The binding of ATP and its subsequent hydrolysis by HslU are essential for unfolding of protein substrates subsequently hydrolyzed by HslV. HslU recognizes the N-terminal part of its protein substrates and unfolds these before they are guided to HslV for hydrolysis.</text>
</comment>
<comment type="subunit">
    <text evidence="1">A double ring-shaped homohexamer of HslV is capped on each side by a ring-shaped HslU homohexamer. The assembly of the HslU/HslV complex is dependent on binding of ATP.</text>
</comment>
<comment type="subcellular location">
    <subcellularLocation>
        <location evidence="1">Cytoplasm</location>
    </subcellularLocation>
</comment>
<comment type="similarity">
    <text evidence="1">Belongs to the ClpX chaperone family. HslU subfamily.</text>
</comment>
<proteinExistence type="inferred from homology"/>
<evidence type="ECO:0000255" key="1">
    <source>
        <dbReference type="HAMAP-Rule" id="MF_00249"/>
    </source>
</evidence>
<dbReference type="EMBL" id="CP000569">
    <property type="protein sequence ID" value="ABN74819.1"/>
    <property type="molecule type" value="Genomic_DNA"/>
</dbReference>
<dbReference type="RefSeq" id="WP_005620148.1">
    <property type="nucleotide sequence ID" value="NC_009053.1"/>
</dbReference>
<dbReference type="SMR" id="A3N333"/>
<dbReference type="STRING" id="416269.APL_1735"/>
<dbReference type="EnsemblBacteria" id="ABN74819">
    <property type="protein sequence ID" value="ABN74819"/>
    <property type="gene ID" value="APL_1735"/>
</dbReference>
<dbReference type="GeneID" id="48600025"/>
<dbReference type="KEGG" id="apl:APL_1735"/>
<dbReference type="eggNOG" id="COG1220">
    <property type="taxonomic scope" value="Bacteria"/>
</dbReference>
<dbReference type="HOGENOM" id="CLU_033123_0_0_6"/>
<dbReference type="Proteomes" id="UP000001432">
    <property type="component" value="Chromosome"/>
</dbReference>
<dbReference type="GO" id="GO:0009376">
    <property type="term" value="C:HslUV protease complex"/>
    <property type="evidence" value="ECO:0007669"/>
    <property type="project" value="UniProtKB-UniRule"/>
</dbReference>
<dbReference type="GO" id="GO:0005524">
    <property type="term" value="F:ATP binding"/>
    <property type="evidence" value="ECO:0007669"/>
    <property type="project" value="UniProtKB-UniRule"/>
</dbReference>
<dbReference type="GO" id="GO:0016887">
    <property type="term" value="F:ATP hydrolysis activity"/>
    <property type="evidence" value="ECO:0007669"/>
    <property type="project" value="InterPro"/>
</dbReference>
<dbReference type="GO" id="GO:0008233">
    <property type="term" value="F:peptidase activity"/>
    <property type="evidence" value="ECO:0007669"/>
    <property type="project" value="InterPro"/>
</dbReference>
<dbReference type="GO" id="GO:0036402">
    <property type="term" value="F:proteasome-activating activity"/>
    <property type="evidence" value="ECO:0007669"/>
    <property type="project" value="UniProtKB-UniRule"/>
</dbReference>
<dbReference type="GO" id="GO:0043335">
    <property type="term" value="P:protein unfolding"/>
    <property type="evidence" value="ECO:0007669"/>
    <property type="project" value="UniProtKB-UniRule"/>
</dbReference>
<dbReference type="GO" id="GO:0051603">
    <property type="term" value="P:proteolysis involved in protein catabolic process"/>
    <property type="evidence" value="ECO:0007669"/>
    <property type="project" value="TreeGrafter"/>
</dbReference>
<dbReference type="CDD" id="cd19498">
    <property type="entry name" value="RecA-like_HslU"/>
    <property type="match status" value="1"/>
</dbReference>
<dbReference type="FunFam" id="1.10.8.10:FF:000028">
    <property type="entry name" value="ATP-dependent protease ATPase subunit HslU"/>
    <property type="match status" value="2"/>
</dbReference>
<dbReference type="FunFam" id="1.10.8.60:FF:000027">
    <property type="entry name" value="ATP-dependent protease ATPase subunit HslU"/>
    <property type="match status" value="1"/>
</dbReference>
<dbReference type="FunFam" id="3.40.50.300:FF:000213">
    <property type="entry name" value="ATP-dependent protease ATPase subunit HslU"/>
    <property type="match status" value="1"/>
</dbReference>
<dbReference type="FunFam" id="3.40.50.300:FF:000220">
    <property type="entry name" value="ATP-dependent protease ATPase subunit HslU"/>
    <property type="match status" value="1"/>
</dbReference>
<dbReference type="Gene3D" id="1.10.8.60">
    <property type="match status" value="1"/>
</dbReference>
<dbReference type="Gene3D" id="1.10.8.10">
    <property type="entry name" value="DNA helicase RuvA subunit, C-terminal domain"/>
    <property type="match status" value="1"/>
</dbReference>
<dbReference type="Gene3D" id="3.40.50.300">
    <property type="entry name" value="P-loop containing nucleotide triphosphate hydrolases"/>
    <property type="match status" value="2"/>
</dbReference>
<dbReference type="HAMAP" id="MF_00249">
    <property type="entry name" value="HslU"/>
    <property type="match status" value="1"/>
</dbReference>
<dbReference type="InterPro" id="IPR003593">
    <property type="entry name" value="AAA+_ATPase"/>
</dbReference>
<dbReference type="InterPro" id="IPR050052">
    <property type="entry name" value="ATP-dep_Clp_protease_ClpX"/>
</dbReference>
<dbReference type="InterPro" id="IPR003959">
    <property type="entry name" value="ATPase_AAA_core"/>
</dbReference>
<dbReference type="InterPro" id="IPR019489">
    <property type="entry name" value="Clp_ATPase_C"/>
</dbReference>
<dbReference type="InterPro" id="IPR004491">
    <property type="entry name" value="HslU"/>
</dbReference>
<dbReference type="InterPro" id="IPR027417">
    <property type="entry name" value="P-loop_NTPase"/>
</dbReference>
<dbReference type="NCBIfam" id="TIGR00390">
    <property type="entry name" value="hslU"/>
    <property type="match status" value="1"/>
</dbReference>
<dbReference type="NCBIfam" id="NF003544">
    <property type="entry name" value="PRK05201.1"/>
    <property type="match status" value="1"/>
</dbReference>
<dbReference type="PANTHER" id="PTHR48102">
    <property type="entry name" value="ATP-DEPENDENT CLP PROTEASE ATP-BINDING SUBUNIT CLPX-LIKE, MITOCHONDRIAL-RELATED"/>
    <property type="match status" value="1"/>
</dbReference>
<dbReference type="PANTHER" id="PTHR48102:SF3">
    <property type="entry name" value="ATP-DEPENDENT PROTEASE ATPASE SUBUNIT HSLU"/>
    <property type="match status" value="1"/>
</dbReference>
<dbReference type="Pfam" id="PF00004">
    <property type="entry name" value="AAA"/>
    <property type="match status" value="1"/>
</dbReference>
<dbReference type="Pfam" id="PF07724">
    <property type="entry name" value="AAA_2"/>
    <property type="match status" value="1"/>
</dbReference>
<dbReference type="SMART" id="SM00382">
    <property type="entry name" value="AAA"/>
    <property type="match status" value="1"/>
</dbReference>
<dbReference type="SMART" id="SM01086">
    <property type="entry name" value="ClpB_D2-small"/>
    <property type="match status" value="1"/>
</dbReference>
<dbReference type="SUPFAM" id="SSF52540">
    <property type="entry name" value="P-loop containing nucleoside triphosphate hydrolases"/>
    <property type="match status" value="1"/>
</dbReference>
<keyword id="KW-0067">ATP-binding</keyword>
<keyword id="KW-0143">Chaperone</keyword>
<keyword id="KW-0963">Cytoplasm</keyword>
<keyword id="KW-0547">Nucleotide-binding</keyword>
<keyword id="KW-1185">Reference proteome</keyword>
<name>HSLU_ACTP2</name>
<organism>
    <name type="scientific">Actinobacillus pleuropneumoniae serotype 5b (strain L20)</name>
    <dbReference type="NCBI Taxonomy" id="416269"/>
    <lineage>
        <taxon>Bacteria</taxon>
        <taxon>Pseudomonadati</taxon>
        <taxon>Pseudomonadota</taxon>
        <taxon>Gammaproteobacteria</taxon>
        <taxon>Pasteurellales</taxon>
        <taxon>Pasteurellaceae</taxon>
        <taxon>Actinobacillus</taxon>
    </lineage>
</organism>
<protein>
    <recommendedName>
        <fullName evidence="1">ATP-dependent protease ATPase subunit HslU</fullName>
    </recommendedName>
    <alternativeName>
        <fullName evidence="1">Unfoldase HslU</fullName>
    </alternativeName>
</protein>
<accession>A3N333</accession>
<sequence length="440" mass="49476">MSMTPREIVSELDAHIIGQNEAKRAVAIALRNRWRRMQLPEDLRQEVTPKNILMIGPTGVGKTEIARRLAKLANAPFIKVEATKFTEVGYVGKEVDSIIKDLTDVAVKLVKSQAVEKNRMRAQDAAEDRILDVLLPPAKDQWGNVQESDNSSTRQVFRKKLREGQLDDKEIEIDVAAQVSVEIMTPPGMEEMTSQLQSLFEGMSPNKTKKRKMKIKDALKVMVDEEAAKLVNPEELKQQAIEAVEQHGIVFIDEIDKICKKGEHSGGDVSREGVQRDLLPIIEGSTVNTKHGMVKTDHILFICSGAFQVARPSDLLPELQGRLPIRVELKSLTKEDFERILTEPNASLTLQYRELMKTEGVEIEFTKDGISKIAESAFRVNEKTENIGARRLHTVLERLMDGISFDASERSGEKIVIDEKYVQAALNDVVENEDLSRFIL</sequence>
<gene>
    <name evidence="1" type="primary">hslU</name>
    <name type="ordered locus">APL_1735</name>
</gene>